<accession>Q3A220</accession>
<comment type="function">
    <text evidence="1">Catalyzes the attachment of tyrosine to tRNA(Tyr) in a two-step reaction: tyrosine is first activated by ATP to form Tyr-AMP and then transferred to the acceptor end of tRNA(Tyr).</text>
</comment>
<comment type="catalytic activity">
    <reaction evidence="1">
        <text>tRNA(Tyr) + L-tyrosine + ATP = L-tyrosyl-tRNA(Tyr) + AMP + diphosphate + H(+)</text>
        <dbReference type="Rhea" id="RHEA:10220"/>
        <dbReference type="Rhea" id="RHEA-COMP:9706"/>
        <dbReference type="Rhea" id="RHEA-COMP:9707"/>
        <dbReference type="ChEBI" id="CHEBI:15378"/>
        <dbReference type="ChEBI" id="CHEBI:30616"/>
        <dbReference type="ChEBI" id="CHEBI:33019"/>
        <dbReference type="ChEBI" id="CHEBI:58315"/>
        <dbReference type="ChEBI" id="CHEBI:78442"/>
        <dbReference type="ChEBI" id="CHEBI:78536"/>
        <dbReference type="ChEBI" id="CHEBI:456215"/>
        <dbReference type="EC" id="6.1.1.1"/>
    </reaction>
</comment>
<comment type="subunit">
    <text evidence="1">Homodimer.</text>
</comment>
<comment type="subcellular location">
    <subcellularLocation>
        <location evidence="1">Cytoplasm</location>
    </subcellularLocation>
</comment>
<comment type="similarity">
    <text evidence="1">Belongs to the class-I aminoacyl-tRNA synthetase family. TyrS type 2 subfamily.</text>
</comment>
<evidence type="ECO:0000255" key="1">
    <source>
        <dbReference type="HAMAP-Rule" id="MF_02007"/>
    </source>
</evidence>
<name>SYY_SYNC1</name>
<dbReference type="EC" id="6.1.1.1" evidence="1"/>
<dbReference type="EMBL" id="CP000142">
    <property type="protein sequence ID" value="ABA89587.1"/>
    <property type="molecule type" value="Genomic_DNA"/>
</dbReference>
<dbReference type="RefSeq" id="WP_011342109.1">
    <property type="nucleotide sequence ID" value="NC_007498.2"/>
</dbReference>
<dbReference type="SMR" id="Q3A220"/>
<dbReference type="STRING" id="338963.Pcar_2348"/>
<dbReference type="KEGG" id="pca:Pcar_2348"/>
<dbReference type="eggNOG" id="COG0162">
    <property type="taxonomic scope" value="Bacteria"/>
</dbReference>
<dbReference type="HOGENOM" id="CLU_024003_5_0_7"/>
<dbReference type="OrthoDB" id="9804243at2"/>
<dbReference type="Proteomes" id="UP000002534">
    <property type="component" value="Chromosome"/>
</dbReference>
<dbReference type="GO" id="GO:0005829">
    <property type="term" value="C:cytosol"/>
    <property type="evidence" value="ECO:0007669"/>
    <property type="project" value="TreeGrafter"/>
</dbReference>
<dbReference type="GO" id="GO:0005524">
    <property type="term" value="F:ATP binding"/>
    <property type="evidence" value="ECO:0007669"/>
    <property type="project" value="UniProtKB-UniRule"/>
</dbReference>
<dbReference type="GO" id="GO:0003723">
    <property type="term" value="F:RNA binding"/>
    <property type="evidence" value="ECO:0007669"/>
    <property type="project" value="UniProtKB-KW"/>
</dbReference>
<dbReference type="GO" id="GO:0004831">
    <property type="term" value="F:tyrosine-tRNA ligase activity"/>
    <property type="evidence" value="ECO:0007669"/>
    <property type="project" value="UniProtKB-UniRule"/>
</dbReference>
<dbReference type="GO" id="GO:0006437">
    <property type="term" value="P:tyrosyl-tRNA aminoacylation"/>
    <property type="evidence" value="ECO:0007669"/>
    <property type="project" value="UniProtKB-UniRule"/>
</dbReference>
<dbReference type="CDD" id="cd00165">
    <property type="entry name" value="S4"/>
    <property type="match status" value="1"/>
</dbReference>
<dbReference type="CDD" id="cd00805">
    <property type="entry name" value="TyrRS_core"/>
    <property type="match status" value="1"/>
</dbReference>
<dbReference type="FunFam" id="3.10.290.10:FF:000022">
    <property type="entry name" value="Tyrosine--tRNA ligase"/>
    <property type="match status" value="1"/>
</dbReference>
<dbReference type="FunFam" id="3.40.50.620:FF:000061">
    <property type="entry name" value="Tyrosine--tRNA ligase"/>
    <property type="match status" value="1"/>
</dbReference>
<dbReference type="Gene3D" id="3.40.50.620">
    <property type="entry name" value="HUPs"/>
    <property type="match status" value="1"/>
</dbReference>
<dbReference type="Gene3D" id="3.10.290.10">
    <property type="entry name" value="RNA-binding S4 domain"/>
    <property type="match status" value="1"/>
</dbReference>
<dbReference type="Gene3D" id="1.10.240.10">
    <property type="entry name" value="Tyrosyl-Transfer RNA Synthetase"/>
    <property type="match status" value="1"/>
</dbReference>
<dbReference type="HAMAP" id="MF_02007">
    <property type="entry name" value="Tyr_tRNA_synth_type2"/>
    <property type="match status" value="1"/>
</dbReference>
<dbReference type="InterPro" id="IPR001412">
    <property type="entry name" value="aa-tRNA-synth_I_CS"/>
</dbReference>
<dbReference type="InterPro" id="IPR002305">
    <property type="entry name" value="aa-tRNA-synth_Ic"/>
</dbReference>
<dbReference type="InterPro" id="IPR014729">
    <property type="entry name" value="Rossmann-like_a/b/a_fold"/>
</dbReference>
<dbReference type="InterPro" id="IPR036986">
    <property type="entry name" value="S4_RNA-bd_sf"/>
</dbReference>
<dbReference type="InterPro" id="IPR054608">
    <property type="entry name" value="SYY-like_C"/>
</dbReference>
<dbReference type="InterPro" id="IPR002307">
    <property type="entry name" value="Tyr-tRNA-ligase"/>
</dbReference>
<dbReference type="InterPro" id="IPR024088">
    <property type="entry name" value="Tyr-tRNA-ligase_bac-type"/>
</dbReference>
<dbReference type="InterPro" id="IPR024108">
    <property type="entry name" value="Tyr-tRNA-ligase_bac_2"/>
</dbReference>
<dbReference type="NCBIfam" id="TIGR00234">
    <property type="entry name" value="tyrS"/>
    <property type="match status" value="1"/>
</dbReference>
<dbReference type="PANTHER" id="PTHR11766:SF1">
    <property type="entry name" value="TYROSINE--TRNA LIGASE"/>
    <property type="match status" value="1"/>
</dbReference>
<dbReference type="PANTHER" id="PTHR11766">
    <property type="entry name" value="TYROSYL-TRNA SYNTHETASE"/>
    <property type="match status" value="1"/>
</dbReference>
<dbReference type="Pfam" id="PF22421">
    <property type="entry name" value="SYY_C-terminal"/>
    <property type="match status" value="1"/>
</dbReference>
<dbReference type="Pfam" id="PF00579">
    <property type="entry name" value="tRNA-synt_1b"/>
    <property type="match status" value="1"/>
</dbReference>
<dbReference type="PRINTS" id="PR01040">
    <property type="entry name" value="TRNASYNTHTYR"/>
</dbReference>
<dbReference type="SUPFAM" id="SSF55174">
    <property type="entry name" value="Alpha-L RNA-binding motif"/>
    <property type="match status" value="1"/>
</dbReference>
<dbReference type="SUPFAM" id="SSF52374">
    <property type="entry name" value="Nucleotidylyl transferase"/>
    <property type="match status" value="1"/>
</dbReference>
<dbReference type="PROSITE" id="PS00178">
    <property type="entry name" value="AA_TRNA_LIGASE_I"/>
    <property type="match status" value="1"/>
</dbReference>
<dbReference type="PROSITE" id="PS50889">
    <property type="entry name" value="S4"/>
    <property type="match status" value="1"/>
</dbReference>
<protein>
    <recommendedName>
        <fullName evidence="1">Tyrosine--tRNA ligase</fullName>
        <ecNumber evidence="1">6.1.1.1</ecNumber>
    </recommendedName>
    <alternativeName>
        <fullName evidence="1">Tyrosyl-tRNA synthetase</fullName>
        <shortName evidence="1">TyrRS</shortName>
    </alternativeName>
</protein>
<organism>
    <name type="scientific">Syntrophotalea carbinolica (strain DSM 2380 / NBRC 103641 / GraBd1)</name>
    <name type="common">Pelobacter carbinolicus</name>
    <dbReference type="NCBI Taxonomy" id="338963"/>
    <lineage>
        <taxon>Bacteria</taxon>
        <taxon>Pseudomonadati</taxon>
        <taxon>Thermodesulfobacteriota</taxon>
        <taxon>Desulfuromonadia</taxon>
        <taxon>Desulfuromonadales</taxon>
        <taxon>Syntrophotaleaceae</taxon>
        <taxon>Syntrophotalea</taxon>
    </lineage>
</organism>
<reference key="1">
    <citation type="submission" date="2005-10" db="EMBL/GenBank/DDBJ databases">
        <title>Complete sequence of Pelobacter carbinolicus DSM 2380.</title>
        <authorList>
            <person name="Copeland A."/>
            <person name="Lucas S."/>
            <person name="Lapidus A."/>
            <person name="Barry K."/>
            <person name="Detter J.C."/>
            <person name="Glavina T."/>
            <person name="Hammon N."/>
            <person name="Israni S."/>
            <person name="Pitluck S."/>
            <person name="Chertkov O."/>
            <person name="Schmutz J."/>
            <person name="Larimer F."/>
            <person name="Land M."/>
            <person name="Kyrpides N."/>
            <person name="Ivanova N."/>
            <person name="Richardson P."/>
        </authorList>
    </citation>
    <scope>NUCLEOTIDE SEQUENCE [LARGE SCALE GENOMIC DNA]</scope>
    <source>
        <strain>DSM 2380 / NBRC 103641 / GraBd1</strain>
    </source>
</reference>
<feature type="chain" id="PRO_0000236740" description="Tyrosine--tRNA ligase">
    <location>
        <begin position="1"/>
        <end position="408"/>
    </location>
</feature>
<feature type="domain" description="S4 RNA-binding" evidence="1">
    <location>
        <begin position="343"/>
        <end position="404"/>
    </location>
</feature>
<feature type="short sequence motif" description="'HIGH' region">
    <location>
        <begin position="46"/>
        <end position="55"/>
    </location>
</feature>
<feature type="short sequence motif" description="'KMSKS' region">
    <location>
        <begin position="230"/>
        <end position="234"/>
    </location>
</feature>
<feature type="binding site" evidence="1">
    <location>
        <position position="233"/>
    </location>
    <ligand>
        <name>ATP</name>
        <dbReference type="ChEBI" id="CHEBI:30616"/>
    </ligand>
</feature>
<sequence length="408" mass="45191">MKSVQEQMAIIRRGAVEILVESELEAKLKKSVETGVPLKVKAGFDPTAPDLHVGHTVLIQKLKQFQDLGHEVNFLIGDFTGMIGDPTGKNETRKALTREEVLKNAETYKQQVFKILDPERTKVVFNSSWMGQMSAADLIGLAGRYTVARMLERDDFHKRFSGQQPIAIHEFLYPLVQGYDSVALKADVELGGTDQKFNLLVGRELQKQEGQVPQCVLTMPLLEGLDGVNKMSKSLGNYIGITEPAKEVFGKVMSISDELMLRYYELLSDVDLAQLQLVRDGVEGKAGGAHPMESKKSLARELVARFYDQAAALRAEEEFVQQFKQKEVPDDIPEVLIDAGEPVWICRLLTDAGLTASNGEARRLVKQGAVKLGGEKIADAGLEVAPAGELILQAGKRRFARIKFLEKK</sequence>
<gene>
    <name evidence="1" type="primary">tyrS</name>
    <name type="ordered locus">Pcar_2348</name>
</gene>
<proteinExistence type="inferred from homology"/>
<keyword id="KW-0030">Aminoacyl-tRNA synthetase</keyword>
<keyword id="KW-0067">ATP-binding</keyword>
<keyword id="KW-0963">Cytoplasm</keyword>
<keyword id="KW-0436">Ligase</keyword>
<keyword id="KW-0547">Nucleotide-binding</keyword>
<keyword id="KW-0648">Protein biosynthesis</keyword>
<keyword id="KW-1185">Reference proteome</keyword>
<keyword id="KW-0694">RNA-binding</keyword>